<proteinExistence type="inferred from homology"/>
<protein>
    <recommendedName>
        <fullName evidence="1">Phosphatidylglycerol--prolipoprotein diacylglyceryl transferase</fullName>
        <ecNumber evidence="1">2.5.1.145</ecNumber>
    </recommendedName>
</protein>
<accession>Q7VRF2</accession>
<sequence>MQFFYTPNFNPIILKVGCISFYWYGMMYVLSFIFAMWFLKYRKRYIVNDIFSSTSEIENLLYLNFLGVVIGGRIGYVLFYQWSMLSQDKLWFFKLWEGGMSFHGGLIGVIISIMWFSYCKNQSFLKISDFIVPAVPVGLGLGRLGNFINGELWGRVTFDIPWAMLFKNALLQDLLTLKIHPEWKFFFDYYGALPRHPSQLYEMILEGIVLFVVIYIFSCKSRPEGSISGLFLLLYGLFRIIIEFFRQPDIHIGLINNFITLGQVLSFPMVIFGFIIMYVSYKFK</sequence>
<gene>
    <name evidence="1" type="primary">lgt</name>
    <name type="ordered locus">Bfl265</name>
</gene>
<evidence type="ECO:0000255" key="1">
    <source>
        <dbReference type="HAMAP-Rule" id="MF_01147"/>
    </source>
</evidence>
<dbReference type="EC" id="2.5.1.145" evidence="1"/>
<dbReference type="EMBL" id="BX248583">
    <property type="protein sequence ID" value="CAD83336.1"/>
    <property type="molecule type" value="Genomic_DNA"/>
</dbReference>
<dbReference type="SMR" id="Q7VRF2"/>
<dbReference type="STRING" id="203907.Bfl265"/>
<dbReference type="KEGG" id="bfl:Bfl265"/>
<dbReference type="eggNOG" id="COG0682">
    <property type="taxonomic scope" value="Bacteria"/>
</dbReference>
<dbReference type="HOGENOM" id="CLU_013386_1_0_6"/>
<dbReference type="OrthoDB" id="871140at2"/>
<dbReference type="UniPathway" id="UPA00664"/>
<dbReference type="Proteomes" id="UP000002192">
    <property type="component" value="Chromosome"/>
</dbReference>
<dbReference type="GO" id="GO:0005886">
    <property type="term" value="C:plasma membrane"/>
    <property type="evidence" value="ECO:0007669"/>
    <property type="project" value="UniProtKB-SubCell"/>
</dbReference>
<dbReference type="GO" id="GO:0008961">
    <property type="term" value="F:phosphatidylglycerol-prolipoprotein diacylglyceryl transferase activity"/>
    <property type="evidence" value="ECO:0007669"/>
    <property type="project" value="UniProtKB-UniRule"/>
</dbReference>
<dbReference type="GO" id="GO:0042158">
    <property type="term" value="P:lipoprotein biosynthetic process"/>
    <property type="evidence" value="ECO:0007669"/>
    <property type="project" value="UniProtKB-UniRule"/>
</dbReference>
<dbReference type="HAMAP" id="MF_01147">
    <property type="entry name" value="Lgt"/>
    <property type="match status" value="1"/>
</dbReference>
<dbReference type="InterPro" id="IPR001640">
    <property type="entry name" value="Lgt"/>
</dbReference>
<dbReference type="NCBIfam" id="TIGR00544">
    <property type="entry name" value="lgt"/>
    <property type="match status" value="1"/>
</dbReference>
<dbReference type="PANTHER" id="PTHR30589:SF0">
    <property type="entry name" value="PHOSPHATIDYLGLYCEROL--PROLIPOPROTEIN DIACYLGLYCERYL TRANSFERASE"/>
    <property type="match status" value="1"/>
</dbReference>
<dbReference type="PANTHER" id="PTHR30589">
    <property type="entry name" value="PROLIPOPROTEIN DIACYLGLYCERYL TRANSFERASE"/>
    <property type="match status" value="1"/>
</dbReference>
<dbReference type="Pfam" id="PF01790">
    <property type="entry name" value="LGT"/>
    <property type="match status" value="1"/>
</dbReference>
<dbReference type="PROSITE" id="PS01311">
    <property type="entry name" value="LGT"/>
    <property type="match status" value="1"/>
</dbReference>
<keyword id="KW-0997">Cell inner membrane</keyword>
<keyword id="KW-1003">Cell membrane</keyword>
<keyword id="KW-0472">Membrane</keyword>
<keyword id="KW-1185">Reference proteome</keyword>
<keyword id="KW-0808">Transferase</keyword>
<keyword id="KW-0812">Transmembrane</keyword>
<keyword id="KW-1133">Transmembrane helix</keyword>
<feature type="chain" id="PRO_0000172577" description="Phosphatidylglycerol--prolipoprotein diacylglyceryl transferase">
    <location>
        <begin position="1"/>
        <end position="284"/>
    </location>
</feature>
<feature type="transmembrane region" description="Helical" evidence="1">
    <location>
        <begin position="19"/>
        <end position="39"/>
    </location>
</feature>
<feature type="transmembrane region" description="Helical" evidence="1">
    <location>
        <begin position="60"/>
        <end position="80"/>
    </location>
</feature>
<feature type="transmembrane region" description="Helical" evidence="1">
    <location>
        <begin position="98"/>
        <end position="118"/>
    </location>
</feature>
<feature type="transmembrane region" description="Helical" evidence="1">
    <location>
        <begin position="130"/>
        <end position="150"/>
    </location>
</feature>
<feature type="transmembrane region" description="Helical" evidence="1">
    <location>
        <begin position="199"/>
        <end position="219"/>
    </location>
</feature>
<feature type="transmembrane region" description="Helical" evidence="1">
    <location>
        <begin position="225"/>
        <end position="245"/>
    </location>
</feature>
<feature type="transmembrane region" description="Helical" evidence="1">
    <location>
        <begin position="258"/>
        <end position="278"/>
    </location>
</feature>
<feature type="binding site" evidence="1">
    <location>
        <position position="143"/>
    </location>
    <ligand>
        <name>a 1,2-diacyl-sn-glycero-3-phospho-(1'-sn-glycerol)</name>
        <dbReference type="ChEBI" id="CHEBI:64716"/>
    </ligand>
</feature>
<organism>
    <name type="scientific">Blochmanniella floridana</name>
    <dbReference type="NCBI Taxonomy" id="203907"/>
    <lineage>
        <taxon>Bacteria</taxon>
        <taxon>Pseudomonadati</taxon>
        <taxon>Pseudomonadota</taxon>
        <taxon>Gammaproteobacteria</taxon>
        <taxon>Enterobacterales</taxon>
        <taxon>Enterobacteriaceae</taxon>
        <taxon>ant endosymbionts</taxon>
        <taxon>Candidatus Blochmanniella</taxon>
    </lineage>
</organism>
<reference key="1">
    <citation type="journal article" date="2003" name="Proc. Natl. Acad. Sci. U.S.A.">
        <title>The genome sequence of Blochmannia floridanus: comparative analysis of reduced genomes.</title>
        <authorList>
            <person name="Gil R."/>
            <person name="Silva F.J."/>
            <person name="Zientz E."/>
            <person name="Delmotte F."/>
            <person name="Gonzalez-Candelas F."/>
            <person name="Latorre A."/>
            <person name="Rausell C."/>
            <person name="Kamerbeek J."/>
            <person name="Gadau J."/>
            <person name="Hoelldobler B."/>
            <person name="van Ham R.C.H.J."/>
            <person name="Gross R."/>
            <person name="Moya A."/>
        </authorList>
    </citation>
    <scope>NUCLEOTIDE SEQUENCE [LARGE SCALE GENOMIC DNA]</scope>
</reference>
<name>LGT_BLOFL</name>
<comment type="function">
    <text evidence="1">Catalyzes the transfer of the diacylglyceryl group from phosphatidylglycerol to the sulfhydryl group of the N-terminal cysteine of a prolipoprotein, the first step in the formation of mature lipoproteins.</text>
</comment>
<comment type="catalytic activity">
    <reaction evidence="1">
        <text>L-cysteinyl-[prolipoprotein] + a 1,2-diacyl-sn-glycero-3-phospho-(1'-sn-glycerol) = an S-1,2-diacyl-sn-glyceryl-L-cysteinyl-[prolipoprotein] + sn-glycerol 1-phosphate + H(+)</text>
        <dbReference type="Rhea" id="RHEA:56712"/>
        <dbReference type="Rhea" id="RHEA-COMP:14679"/>
        <dbReference type="Rhea" id="RHEA-COMP:14680"/>
        <dbReference type="ChEBI" id="CHEBI:15378"/>
        <dbReference type="ChEBI" id="CHEBI:29950"/>
        <dbReference type="ChEBI" id="CHEBI:57685"/>
        <dbReference type="ChEBI" id="CHEBI:64716"/>
        <dbReference type="ChEBI" id="CHEBI:140658"/>
        <dbReference type="EC" id="2.5.1.145"/>
    </reaction>
</comment>
<comment type="pathway">
    <text evidence="1">Protein modification; lipoprotein biosynthesis (diacylglyceryl transfer).</text>
</comment>
<comment type="subcellular location">
    <subcellularLocation>
        <location evidence="1">Cell inner membrane</location>
        <topology evidence="1">Multi-pass membrane protein</topology>
    </subcellularLocation>
</comment>
<comment type="similarity">
    <text evidence="1">Belongs to the Lgt family.</text>
</comment>